<comment type="miscellaneous">
    <text>May contribute to vancomycin resistance.</text>
</comment>
<comment type="similarity">
    <text evidence="1">Belongs to the ATP-dependent AMP-binding enzyme family.</text>
</comment>
<organism>
    <name type="scientific">Staphylococcus aureus (strain Mu3 / ATCC 700698)</name>
    <dbReference type="NCBI Taxonomy" id="418127"/>
    <lineage>
        <taxon>Bacteria</taxon>
        <taxon>Bacillati</taxon>
        <taxon>Bacillota</taxon>
        <taxon>Bacilli</taxon>
        <taxon>Bacillales</taxon>
        <taxon>Staphylococcaceae</taxon>
        <taxon>Staphylococcus</taxon>
    </lineage>
</organism>
<sequence length="458" mass="52024">MNVILEQLKTHTQNKPNDIALHIDDETITYSQLNARITSAVESLQKYSLNPVVAINMKSPVQSIICYLALHRLHKVPMMMEGKWQSTIHRQLIEKYGIKDVIGDTGLMQNIDSPMFIDSTQLQHYPNLLHIGFTSGTTGLPKAYYRDEDSWLASFEVNEMLMLKNENAIAAPGPLSHSLTLYALLFALSSGRTFIGQTTFHPEKLLNQCHKISSYKVAMFLVPTMIKSLLLVYNNEHTIQSFFSSGDKLHSSIFKKIKNQANDINLIEFFGTSETSFISYNLNQQAPVESVGVLFPNVELKTTNHDHNGIGTICIKSNMMFSGYVSEQCINNDEWFVTNDNGYVKEQYLYLTGRQQDMLIIGGQNIYPAHVERLLTQSSSIDEAIIIGIPNERFGQIGVLLYSGDVTLTHKNVKQFLKKKVKRYEIPSMIHHVEKMYYTASGKIAREKMMSMYLRGEL</sequence>
<protein>
    <recommendedName>
        <fullName>Putative long chain fatty acid-CoA ligase VraA</fullName>
        <ecNumber>6.2.1.-</ecNumber>
    </recommendedName>
    <alternativeName>
        <fullName>Acyl-CoA synthetase</fullName>
    </alternativeName>
</protein>
<feature type="chain" id="PRO_0000193190" description="Putative long chain fatty acid-CoA ligase VraA">
    <location>
        <begin position="1"/>
        <end position="458"/>
    </location>
</feature>
<feature type="sequence conflict" description="In Ref. 1; BAB03327." evidence="1" ref="1">
    <original>E</original>
    <variation>Q</variation>
    <location>
        <position position="159"/>
    </location>
</feature>
<keyword id="KW-0276">Fatty acid metabolism</keyword>
<keyword id="KW-0436">Ligase</keyword>
<keyword id="KW-0443">Lipid metabolism</keyword>
<accession>Q9KWK5</accession>
<accession>A7WZ14</accession>
<proteinExistence type="inferred from homology"/>
<gene>
    <name type="primary">vraA</name>
    <name type="ordered locus">SAHV_0573</name>
</gene>
<dbReference type="EC" id="6.2.1.-"/>
<dbReference type="EMBL" id="AB035449">
    <property type="protein sequence ID" value="BAB03327.2"/>
    <property type="molecule type" value="Genomic_DNA"/>
</dbReference>
<dbReference type="EMBL" id="AP009324">
    <property type="protein sequence ID" value="BAF77456.1"/>
    <property type="molecule type" value="Genomic_DNA"/>
</dbReference>
<dbReference type="RefSeq" id="WP_001100835.1">
    <property type="nucleotide sequence ID" value="NC_009782.1"/>
</dbReference>
<dbReference type="SMR" id="Q9KWK5"/>
<dbReference type="KEGG" id="saw:SAHV_0573"/>
<dbReference type="HOGENOM" id="CLU_000022_59_0_9"/>
<dbReference type="GO" id="GO:0031956">
    <property type="term" value="F:medium-chain fatty acid-CoA ligase activity"/>
    <property type="evidence" value="ECO:0007669"/>
    <property type="project" value="TreeGrafter"/>
</dbReference>
<dbReference type="GO" id="GO:0006631">
    <property type="term" value="P:fatty acid metabolic process"/>
    <property type="evidence" value="ECO:0007669"/>
    <property type="project" value="UniProtKB-KW"/>
</dbReference>
<dbReference type="CDD" id="cd17633">
    <property type="entry name" value="AFD_YhfT-like"/>
    <property type="match status" value="1"/>
</dbReference>
<dbReference type="Gene3D" id="3.30.300.30">
    <property type="match status" value="1"/>
</dbReference>
<dbReference type="Gene3D" id="3.40.50.12780">
    <property type="entry name" value="N-terminal domain of ligase-like"/>
    <property type="match status" value="1"/>
</dbReference>
<dbReference type="InterPro" id="IPR025110">
    <property type="entry name" value="AMP-bd_C"/>
</dbReference>
<dbReference type="InterPro" id="IPR045851">
    <property type="entry name" value="AMP-bd_C_sf"/>
</dbReference>
<dbReference type="InterPro" id="IPR020845">
    <property type="entry name" value="AMP-binding_CS"/>
</dbReference>
<dbReference type="InterPro" id="IPR000873">
    <property type="entry name" value="AMP-dep_synth/lig_dom"/>
</dbReference>
<dbReference type="InterPro" id="IPR042099">
    <property type="entry name" value="ANL_N_sf"/>
</dbReference>
<dbReference type="PANTHER" id="PTHR43201">
    <property type="entry name" value="ACYL-COA SYNTHETASE"/>
    <property type="match status" value="1"/>
</dbReference>
<dbReference type="PANTHER" id="PTHR43201:SF5">
    <property type="entry name" value="MEDIUM-CHAIN ACYL-COA LIGASE ACSF2, MITOCHONDRIAL"/>
    <property type="match status" value="1"/>
</dbReference>
<dbReference type="Pfam" id="PF00501">
    <property type="entry name" value="AMP-binding"/>
    <property type="match status" value="1"/>
</dbReference>
<dbReference type="Pfam" id="PF13193">
    <property type="entry name" value="AMP-binding_C"/>
    <property type="match status" value="1"/>
</dbReference>
<dbReference type="SUPFAM" id="SSF56801">
    <property type="entry name" value="Acetyl-CoA synthetase-like"/>
    <property type="match status" value="1"/>
</dbReference>
<dbReference type="PROSITE" id="PS00455">
    <property type="entry name" value="AMP_BINDING"/>
    <property type="match status" value="1"/>
</dbReference>
<reference key="1">
    <citation type="journal article" date="2000" name="Biochem. Biophys. Res. Commun.">
        <title>Identification of the up- and down-regulated genes in vancomycin-resistant Staphylococcus aureus strains Mu3 and Mu50 by cDNA differential hybridization method.</title>
        <authorList>
            <person name="Kuroda M."/>
            <person name="Kuwahara-Arai K."/>
            <person name="Hiramatsu K."/>
        </authorList>
    </citation>
    <scope>NUCLEOTIDE SEQUENCE [GENOMIC DNA]</scope>
    <scope>VANCOMYCIN RESISTANCE</scope>
</reference>
<reference key="2">
    <citation type="journal article" date="2008" name="Antimicrob. Agents Chemother.">
        <title>Mutated response regulator graR is responsible for phenotypic conversion of Staphylococcus aureus from heterogeneous vancomycin-intermediate resistance to vancomycin-intermediate resistance.</title>
        <authorList>
            <person name="Neoh H.-M."/>
            <person name="Cui L."/>
            <person name="Yuzawa H."/>
            <person name="Takeuchi F."/>
            <person name="Matsuo M."/>
            <person name="Hiramatsu K."/>
        </authorList>
    </citation>
    <scope>NUCLEOTIDE SEQUENCE [LARGE SCALE GENOMIC DNA]</scope>
    <source>
        <strain>Mu3 / ATCC 700698</strain>
    </source>
</reference>
<name>VRAA_STAA1</name>
<evidence type="ECO:0000305" key="1"/>